<sequence length="152" mass="17139">MQYHSALYVYIYVTFTTIPYKEKPDIISICFSMLSFVFDFSVRICSRTLESFSWSLISSSAFKVVSAFSLAGSCVLASRSSVGIIVSLLLFNFSTCNFVLFLSAVLIDLFFCTFLPTPTFLPTPFFFMLHLPIFSLLNALELLYLIIAGLHI</sequence>
<proteinExistence type="predicted"/>
<feature type="chain" id="PRO_0000202552" description="Protein FYV5">
    <location>
        <begin position="1"/>
        <end position="152"/>
    </location>
</feature>
<feature type="transmembrane region" description="Helical" evidence="1">
    <location>
        <begin position="26"/>
        <end position="46"/>
    </location>
</feature>
<feature type="transmembrane region" description="Helical" evidence="1">
    <location>
        <begin position="56"/>
        <end position="76"/>
    </location>
</feature>
<feature type="transmembrane region" description="Helical" evidence="1">
    <location>
        <begin position="82"/>
        <end position="102"/>
    </location>
</feature>
<feature type="transmembrane region" description="Helical" evidence="1">
    <location>
        <begin position="106"/>
        <end position="126"/>
    </location>
</feature>
<feature type="transmembrane region" description="Helical" evidence="1">
    <location>
        <begin position="127"/>
        <end position="147"/>
    </location>
</feature>
<evidence type="ECO:0000255" key="1"/>
<evidence type="ECO:0000269" key="2">
    <source>
    </source>
</evidence>
<evidence type="ECO:0000269" key="3">
    <source>
    </source>
</evidence>
<evidence type="ECO:0000269" key="4">
    <source>
    </source>
</evidence>
<evidence type="ECO:0000269" key="5">
    <source>
    </source>
</evidence>
<evidence type="ECO:0000305" key="6"/>
<organism>
    <name type="scientific">Saccharomyces cerevisiae (strain ATCC 204508 / S288c)</name>
    <name type="common">Baker's yeast</name>
    <dbReference type="NCBI Taxonomy" id="559292"/>
    <lineage>
        <taxon>Eukaryota</taxon>
        <taxon>Fungi</taxon>
        <taxon>Dikarya</taxon>
        <taxon>Ascomycota</taxon>
        <taxon>Saccharomycotina</taxon>
        <taxon>Saccharomycetes</taxon>
        <taxon>Saccharomycetales</taxon>
        <taxon>Saccharomycetaceae</taxon>
        <taxon>Saccharomyces</taxon>
    </lineage>
</organism>
<reference key="1">
    <citation type="journal article" date="1992" name="Nature">
        <title>The complete DNA sequence of yeast chromosome III.</title>
        <authorList>
            <person name="Oliver S.G."/>
            <person name="van der Aart Q.J.M."/>
            <person name="Agostoni-Carbone M.L."/>
            <person name="Aigle M."/>
            <person name="Alberghina L."/>
            <person name="Alexandraki D."/>
            <person name="Antoine G."/>
            <person name="Anwar R."/>
            <person name="Ballesta J.P.G."/>
            <person name="Benit P."/>
            <person name="Berben G."/>
            <person name="Bergantino E."/>
            <person name="Biteau N."/>
            <person name="Bolle P.-A."/>
            <person name="Bolotin-Fukuhara M."/>
            <person name="Brown A."/>
            <person name="Brown A.J.P."/>
            <person name="Buhler J.-M."/>
            <person name="Carcano C."/>
            <person name="Carignani G."/>
            <person name="Cederberg H."/>
            <person name="Chanet R."/>
            <person name="Contreras R."/>
            <person name="Crouzet M."/>
            <person name="Daignan-Fornier B."/>
            <person name="Defoor E."/>
            <person name="Delgado M.D."/>
            <person name="Demolder J."/>
            <person name="Doira C."/>
            <person name="Dubois E."/>
            <person name="Dujon B."/>
            <person name="Duesterhoeft A."/>
            <person name="Erdmann D."/>
            <person name="Esteban M."/>
            <person name="Fabre F."/>
            <person name="Fairhead C."/>
            <person name="Faye G."/>
            <person name="Feldmann H."/>
            <person name="Fiers W."/>
            <person name="Francingues-Gaillard M.-C."/>
            <person name="Franco L."/>
            <person name="Frontali L."/>
            <person name="Fukuhara H."/>
            <person name="Fuller L.J."/>
            <person name="Galland P."/>
            <person name="Gent M.E."/>
            <person name="Gigot D."/>
            <person name="Gilliquet V."/>
            <person name="Glansdorff N."/>
            <person name="Goffeau A."/>
            <person name="Grenson M."/>
            <person name="Grisanti P."/>
            <person name="Grivell L.A."/>
            <person name="de Haan M."/>
            <person name="Haasemann M."/>
            <person name="Hatat D."/>
            <person name="Hoenicka J."/>
            <person name="Hegemann J.H."/>
            <person name="Herbert C.J."/>
            <person name="Hilger F."/>
            <person name="Hohmann S."/>
            <person name="Hollenberg C.P."/>
            <person name="Huse K."/>
            <person name="Iborra F."/>
            <person name="Indge K.J."/>
            <person name="Isono K."/>
            <person name="Jacq C."/>
            <person name="Jacquet M."/>
            <person name="James C.M."/>
            <person name="Jauniaux J.-C."/>
            <person name="Jia Y."/>
            <person name="Jimenez A."/>
            <person name="Kelly A."/>
            <person name="Kleinhans U."/>
            <person name="Kreisl P."/>
            <person name="Lanfranchi G."/>
            <person name="Lewis C."/>
            <person name="van der Linden C.G."/>
            <person name="Lucchini G."/>
            <person name="Lutzenkirchen K."/>
            <person name="Maat M.J."/>
            <person name="Mallet L."/>
            <person name="Mannhaupt G."/>
            <person name="Martegani E."/>
            <person name="Mathieu A."/>
            <person name="Maurer C.T.C."/>
            <person name="McConnell D."/>
            <person name="McKee R.A."/>
            <person name="Messenguy F."/>
            <person name="Mewes H.-W."/>
            <person name="Molemans F."/>
            <person name="Montague M.A."/>
            <person name="Muzi Falconi M."/>
            <person name="Navas L."/>
            <person name="Newlon C.S."/>
            <person name="Noone D."/>
            <person name="Pallier C."/>
            <person name="Panzeri L."/>
            <person name="Pearson B.M."/>
            <person name="Perea J."/>
            <person name="Philippsen P."/>
            <person name="Pierard A."/>
            <person name="Planta R.J."/>
            <person name="Plevani P."/>
            <person name="Poetsch B."/>
            <person name="Pohl F.M."/>
            <person name="Purnelle B."/>
            <person name="Ramezani Rad M."/>
            <person name="Rasmussen S.W."/>
            <person name="Raynal A."/>
            <person name="Remacha M.A."/>
            <person name="Richterich P."/>
            <person name="Roberts A.B."/>
            <person name="Rodriguez F."/>
            <person name="Sanz E."/>
            <person name="Schaaff-Gerstenschlaeger I."/>
            <person name="Scherens B."/>
            <person name="Schweitzer B."/>
            <person name="Shu Y."/>
            <person name="Skala J."/>
            <person name="Slonimski P.P."/>
            <person name="Sor F."/>
            <person name="Soustelle C."/>
            <person name="Spiegelberg R."/>
            <person name="Stateva L.I."/>
            <person name="Steensma H.Y."/>
            <person name="Steiner S."/>
            <person name="Thierry A."/>
            <person name="Thireos G."/>
            <person name="Tzermia M."/>
            <person name="Urrestarazu L.A."/>
            <person name="Valle G."/>
            <person name="Vetter I."/>
            <person name="van Vliet-Reedijk J.C."/>
            <person name="Voet M."/>
            <person name="Volckaert G."/>
            <person name="Vreken P."/>
            <person name="Wang H."/>
            <person name="Warmington J.R."/>
            <person name="von Wettstein D."/>
            <person name="Wicksteed B.L."/>
            <person name="Wilson C."/>
            <person name="Wurst H."/>
            <person name="Xu G."/>
            <person name="Yoshikawa A."/>
            <person name="Zimmermann F.K."/>
            <person name="Sgouros J.G."/>
        </authorList>
    </citation>
    <scope>NUCLEOTIDE SEQUENCE [LARGE SCALE GENOMIC DNA]</scope>
    <source>
        <strain>ATCC 204508 / S288c</strain>
    </source>
</reference>
<reference key="2">
    <citation type="journal article" date="2014" name="G3 (Bethesda)">
        <title>The reference genome sequence of Saccharomyces cerevisiae: Then and now.</title>
        <authorList>
            <person name="Engel S.R."/>
            <person name="Dietrich F.S."/>
            <person name="Fisk D.G."/>
            <person name="Binkley G."/>
            <person name="Balakrishnan R."/>
            <person name="Costanzo M.C."/>
            <person name="Dwight S.S."/>
            <person name="Hitz B.C."/>
            <person name="Karra K."/>
            <person name="Nash R.S."/>
            <person name="Weng S."/>
            <person name="Wong E.D."/>
            <person name="Lloyd P."/>
            <person name="Skrzypek M.S."/>
            <person name="Miyasato S.R."/>
            <person name="Simison M."/>
            <person name="Cherry J.M."/>
        </authorList>
    </citation>
    <scope>GENOME REANNOTATION</scope>
    <source>
        <strain>ATCC 204508 / S288c</strain>
    </source>
</reference>
<reference key="3">
    <citation type="journal article" date="2007" name="Genome Res.">
        <title>Approaching a complete repository of sequence-verified protein-encoding clones for Saccharomyces cerevisiae.</title>
        <authorList>
            <person name="Hu Y."/>
            <person name="Rolfs A."/>
            <person name="Bhullar B."/>
            <person name="Murthy T.V.S."/>
            <person name="Zhu C."/>
            <person name="Berger M.F."/>
            <person name="Camargo A.A."/>
            <person name="Kelley F."/>
            <person name="McCarron S."/>
            <person name="Jepson D."/>
            <person name="Richardson A."/>
            <person name="Raphael J."/>
            <person name="Moreira D."/>
            <person name="Taycher E."/>
            <person name="Zuo D."/>
            <person name="Mohr S."/>
            <person name="Kane M.F."/>
            <person name="Williamson J."/>
            <person name="Simpson A.J.G."/>
            <person name="Bulyk M.L."/>
            <person name="Harlow E."/>
            <person name="Marsischky G."/>
            <person name="Kolodner R.D."/>
            <person name="LaBaer J."/>
        </authorList>
    </citation>
    <scope>NUCLEOTIDE SEQUENCE [GENOMIC DNA]</scope>
    <source>
        <strain>ATCC 204508 / S288c</strain>
    </source>
</reference>
<reference key="4">
    <citation type="journal article" date="1999" name="Yeast">
        <title>How to bring orphan genes into functional families.</title>
        <authorList>
            <person name="Bianchi M.M."/>
            <person name="Sartori G."/>
            <person name="Vandenbol M."/>
            <person name="Kaniak A."/>
            <person name="Uccelletti D."/>
            <person name="Mazzoni C."/>
            <person name="Di Rago J.-P."/>
            <person name="Carignani G."/>
            <person name="Slonimski P.P."/>
            <person name="Frontali L."/>
        </authorList>
    </citation>
    <scope>FUNCTION</scope>
</reference>
<reference key="5">
    <citation type="journal article" date="2003" name="FEMS Microbiol. Lett.">
        <title>The budding index of Saccharomyces cerevisiae deletion strains identifies genes important for cell cycle progression.</title>
        <authorList>
            <person name="Zettel M.F."/>
            <person name="Garza L.R."/>
            <person name="Cass A.M."/>
            <person name="Myhre R.A."/>
            <person name="Haizlip L.A."/>
            <person name="Osadebe S.N."/>
            <person name="Sudimack D.W."/>
            <person name="Pathak R."/>
            <person name="Stone T.L."/>
            <person name="Polymenis M."/>
        </authorList>
    </citation>
    <scope>FUNCTION</scope>
</reference>
<reference key="6">
    <citation type="journal article" date="2003" name="Genetics">
        <title>A Saccharomyces cerevisiae genome-wide mutant screen for altered sensitivity to K1 killer toxin.</title>
        <authorList>
            <person name="Page N."/>
            <person name="Gerard-Vincent M."/>
            <person name="Menard P."/>
            <person name="Beaulieu M."/>
            <person name="Azuma M."/>
            <person name="Dijkgraaf G.J.P."/>
            <person name="Li H."/>
            <person name="Marcoux J."/>
            <person name="Nguyen T."/>
            <person name="Dowse T."/>
            <person name="Sdicu A.-M."/>
            <person name="Bussey H."/>
        </authorList>
    </citation>
    <scope>FUNCTION [LARGE SCALE ANALYSIS]</scope>
</reference>
<reference key="7">
    <citation type="journal article" date="2006" name="Mol. Biol. Cell">
        <title>The thioredoxin system protects ribosomes against stress-induced aggregation.</title>
        <authorList>
            <person name="Rand J.D."/>
            <person name="Grant C.M."/>
        </authorList>
    </citation>
    <scope>FUNCTION</scope>
</reference>
<name>FYV5_YEAST</name>
<keyword id="KW-0131">Cell cycle</keyword>
<keyword id="KW-1003">Cell membrane</keyword>
<keyword id="KW-0134">Cell wall</keyword>
<keyword id="KW-0961">Cell wall biogenesis/degradation</keyword>
<keyword id="KW-0472">Membrane</keyword>
<keyword id="KW-1185">Reference proteome</keyword>
<keyword id="KW-0964">Secreted</keyword>
<keyword id="KW-0812">Transmembrane</keyword>
<keyword id="KW-1133">Transmembrane helix</keyword>
<protein>
    <recommendedName>
        <fullName>Protein FYV5</fullName>
    </recommendedName>
    <alternativeName>
        <fullName>Function required for yeast viability protein 5</fullName>
    </alternativeName>
</protein>
<gene>
    <name type="primary">FYV5</name>
    <name type="ordered locus">YCL058C</name>
    <name type="ORF">YCL58C</name>
</gene>
<accession>P25585</accession>
<accession>D6VQU8</accession>
<comment type="function">
    <text evidence="2 3 4 5">Involved in maintaining an adequate ionic strength homeostasis of the cellular aqueous environment, necessary for normal growth rate. Required for survival upon exposure to K1 killer toxin and hence plays a role in cell wall glucan synthesis. Required for dithiothreitol (DTT) resistance. Involved in cell cycle progression.</text>
</comment>
<comment type="subcellular location">
    <subcellularLocation>
        <location evidence="6">Cell membrane</location>
        <topology evidence="6">Multi-pass membrane protein</topology>
    </subcellularLocation>
    <subcellularLocation>
        <location>Secreted</location>
        <location>Cell wall</location>
    </subcellularLocation>
</comment>
<dbReference type="EMBL" id="X59720">
    <property type="protein sequence ID" value="CAA42387.1"/>
    <property type="molecule type" value="Genomic_DNA"/>
</dbReference>
<dbReference type="EMBL" id="AY558144">
    <property type="protein sequence ID" value="AAS56470.1"/>
    <property type="molecule type" value="Genomic_DNA"/>
</dbReference>
<dbReference type="EMBL" id="BK006937">
    <property type="protein sequence ID" value="DAA33856.1"/>
    <property type="molecule type" value="Genomic_DNA"/>
</dbReference>
<dbReference type="PIR" id="S19388">
    <property type="entry name" value="S19388"/>
</dbReference>
<dbReference type="RefSeq" id="NP_009873.1">
    <property type="nucleotide sequence ID" value="NM_001178702.1"/>
</dbReference>
<dbReference type="BioGRID" id="300332">
    <property type="interactions" value="8"/>
</dbReference>
<dbReference type="DIP" id="DIP-4982N"/>
<dbReference type="FunCoup" id="P25585">
    <property type="interactions" value="50"/>
</dbReference>
<dbReference type="IntAct" id="P25585">
    <property type="interactions" value="1"/>
</dbReference>
<dbReference type="STRING" id="4932.YCL058C"/>
<dbReference type="PaxDb" id="4932-YCL058C"/>
<dbReference type="EnsemblFungi" id="YCL058C_mRNA">
    <property type="protein sequence ID" value="YCL058C"/>
    <property type="gene ID" value="YCL058C"/>
</dbReference>
<dbReference type="GeneID" id="850299"/>
<dbReference type="KEGG" id="sce:YCL058C"/>
<dbReference type="AGR" id="SGD:S000000563"/>
<dbReference type="SGD" id="S000000563">
    <property type="gene designation" value="FYV5"/>
</dbReference>
<dbReference type="VEuPathDB" id="FungiDB:YCL058C"/>
<dbReference type="HOGENOM" id="CLU_1723392_0_0_1"/>
<dbReference type="InParanoid" id="P25585"/>
<dbReference type="BioCyc" id="YEAST:G3O-29309-MONOMER"/>
<dbReference type="BioGRID-ORCS" id="850299">
    <property type="hits" value="8 hits in 13 CRISPR screens"/>
</dbReference>
<dbReference type="PRO" id="PR:P25585"/>
<dbReference type="Proteomes" id="UP000002311">
    <property type="component" value="Chromosome III"/>
</dbReference>
<dbReference type="RNAct" id="P25585">
    <property type="molecule type" value="protein"/>
</dbReference>
<dbReference type="GO" id="GO:0005829">
    <property type="term" value="C:cytosol"/>
    <property type="evidence" value="ECO:0007005"/>
    <property type="project" value="SGD"/>
</dbReference>
<dbReference type="GO" id="GO:0005576">
    <property type="term" value="C:extracellular region"/>
    <property type="evidence" value="ECO:0007669"/>
    <property type="project" value="UniProtKB-KW"/>
</dbReference>
<dbReference type="GO" id="GO:0005886">
    <property type="term" value="C:plasma membrane"/>
    <property type="evidence" value="ECO:0007669"/>
    <property type="project" value="UniProtKB-SubCell"/>
</dbReference>
<dbReference type="GO" id="GO:0071555">
    <property type="term" value="P:cell wall organization"/>
    <property type="evidence" value="ECO:0007669"/>
    <property type="project" value="UniProtKB-KW"/>
</dbReference>
<dbReference type="GO" id="GO:0006873">
    <property type="term" value="P:intracellular monoatomic ion homeostasis"/>
    <property type="evidence" value="ECO:0000315"/>
    <property type="project" value="SGD"/>
</dbReference>
<dbReference type="GO" id="GO:0000750">
    <property type="term" value="P:pheromone-dependent signal transduction involved in conjugation with cellular fusion"/>
    <property type="evidence" value="ECO:0000315"/>
    <property type="project" value="SGD"/>
</dbReference>